<proteinExistence type="inferred from homology"/>
<accession>Q65GI7</accession>
<accession>Q62RZ5</accession>
<name>ILVC_BACLD</name>
<protein>
    <recommendedName>
        <fullName evidence="1">Ketol-acid reductoisomerase (NADP(+))</fullName>
        <shortName evidence="1">KARI</shortName>
        <ecNumber evidence="1">1.1.1.86</ecNumber>
    </recommendedName>
    <alternativeName>
        <fullName evidence="1">Acetohydroxy-acid isomeroreductase</fullName>
        <shortName evidence="1">AHIR</shortName>
    </alternativeName>
    <alternativeName>
        <fullName evidence="1">Alpha-keto-beta-hydroxylacyl reductoisomerase</fullName>
    </alternativeName>
    <alternativeName>
        <fullName evidence="1">Ketol-acid reductoisomerase type 1</fullName>
    </alternativeName>
    <alternativeName>
        <fullName evidence="1">Ketol-acid reductoisomerase type I</fullName>
    </alternativeName>
</protein>
<gene>
    <name evidence="1" type="primary">ilvC</name>
    <name type="ordered locus">BLi02959</name>
    <name type="ordered locus">BL00610</name>
</gene>
<organism>
    <name type="scientific">Bacillus licheniformis (strain ATCC 14580 / DSM 13 / JCM 2505 / CCUG 7422 / NBRC 12200 / NCIMB 9375 / NCTC 10341 / NRRL NRS-1264 / Gibson 46)</name>
    <dbReference type="NCBI Taxonomy" id="279010"/>
    <lineage>
        <taxon>Bacteria</taxon>
        <taxon>Bacillati</taxon>
        <taxon>Bacillota</taxon>
        <taxon>Bacilli</taxon>
        <taxon>Bacillales</taxon>
        <taxon>Bacillaceae</taxon>
        <taxon>Bacillus</taxon>
    </lineage>
</organism>
<dbReference type="EC" id="1.1.1.86" evidence="1"/>
<dbReference type="EMBL" id="AE017333">
    <property type="protein sequence ID" value="AAU41827.1"/>
    <property type="molecule type" value="Genomic_DNA"/>
</dbReference>
<dbReference type="EMBL" id="CP000002">
    <property type="protein sequence ID" value="AAU24465.1"/>
    <property type="molecule type" value="Genomic_DNA"/>
</dbReference>
<dbReference type="RefSeq" id="WP_003184095.1">
    <property type="nucleotide sequence ID" value="NC_006322.1"/>
</dbReference>
<dbReference type="SMR" id="Q65GI7"/>
<dbReference type="STRING" id="279010.BL00610"/>
<dbReference type="GeneID" id="92860447"/>
<dbReference type="KEGG" id="bld:BLi02959"/>
<dbReference type="KEGG" id="bli:BL00610"/>
<dbReference type="eggNOG" id="COG0059">
    <property type="taxonomic scope" value="Bacteria"/>
</dbReference>
<dbReference type="HOGENOM" id="CLU_033821_0_1_9"/>
<dbReference type="UniPathway" id="UPA00047">
    <property type="reaction ID" value="UER00056"/>
</dbReference>
<dbReference type="UniPathway" id="UPA00049">
    <property type="reaction ID" value="UER00060"/>
</dbReference>
<dbReference type="Proteomes" id="UP000000606">
    <property type="component" value="Chromosome"/>
</dbReference>
<dbReference type="GO" id="GO:0005829">
    <property type="term" value="C:cytosol"/>
    <property type="evidence" value="ECO:0007669"/>
    <property type="project" value="TreeGrafter"/>
</dbReference>
<dbReference type="GO" id="GO:0004455">
    <property type="term" value="F:ketol-acid reductoisomerase activity"/>
    <property type="evidence" value="ECO:0007669"/>
    <property type="project" value="UniProtKB-UniRule"/>
</dbReference>
<dbReference type="GO" id="GO:0000287">
    <property type="term" value="F:magnesium ion binding"/>
    <property type="evidence" value="ECO:0007669"/>
    <property type="project" value="UniProtKB-UniRule"/>
</dbReference>
<dbReference type="GO" id="GO:0050661">
    <property type="term" value="F:NADP binding"/>
    <property type="evidence" value="ECO:0007669"/>
    <property type="project" value="InterPro"/>
</dbReference>
<dbReference type="GO" id="GO:0009097">
    <property type="term" value="P:isoleucine biosynthetic process"/>
    <property type="evidence" value="ECO:0007669"/>
    <property type="project" value="UniProtKB-UniRule"/>
</dbReference>
<dbReference type="GO" id="GO:0009099">
    <property type="term" value="P:L-valine biosynthetic process"/>
    <property type="evidence" value="ECO:0007669"/>
    <property type="project" value="UniProtKB-UniRule"/>
</dbReference>
<dbReference type="FunFam" id="3.40.50.720:FF:000023">
    <property type="entry name" value="Ketol-acid reductoisomerase (NADP(+))"/>
    <property type="match status" value="1"/>
</dbReference>
<dbReference type="Gene3D" id="6.10.240.10">
    <property type="match status" value="1"/>
</dbReference>
<dbReference type="Gene3D" id="3.40.50.720">
    <property type="entry name" value="NAD(P)-binding Rossmann-like Domain"/>
    <property type="match status" value="1"/>
</dbReference>
<dbReference type="HAMAP" id="MF_00435">
    <property type="entry name" value="IlvC"/>
    <property type="match status" value="1"/>
</dbReference>
<dbReference type="InterPro" id="IPR008927">
    <property type="entry name" value="6-PGluconate_DH-like_C_sf"/>
</dbReference>
<dbReference type="InterPro" id="IPR013023">
    <property type="entry name" value="KARI"/>
</dbReference>
<dbReference type="InterPro" id="IPR000506">
    <property type="entry name" value="KARI_C"/>
</dbReference>
<dbReference type="InterPro" id="IPR013116">
    <property type="entry name" value="KARI_N"/>
</dbReference>
<dbReference type="InterPro" id="IPR014359">
    <property type="entry name" value="KARI_prok"/>
</dbReference>
<dbReference type="InterPro" id="IPR036291">
    <property type="entry name" value="NAD(P)-bd_dom_sf"/>
</dbReference>
<dbReference type="NCBIfam" id="TIGR00465">
    <property type="entry name" value="ilvC"/>
    <property type="match status" value="1"/>
</dbReference>
<dbReference type="NCBIfam" id="NF004017">
    <property type="entry name" value="PRK05479.1"/>
    <property type="match status" value="1"/>
</dbReference>
<dbReference type="NCBIfam" id="NF009940">
    <property type="entry name" value="PRK13403.1"/>
    <property type="match status" value="1"/>
</dbReference>
<dbReference type="PANTHER" id="PTHR21371">
    <property type="entry name" value="KETOL-ACID REDUCTOISOMERASE, MITOCHONDRIAL"/>
    <property type="match status" value="1"/>
</dbReference>
<dbReference type="PANTHER" id="PTHR21371:SF1">
    <property type="entry name" value="KETOL-ACID REDUCTOISOMERASE, MITOCHONDRIAL"/>
    <property type="match status" value="1"/>
</dbReference>
<dbReference type="Pfam" id="PF01450">
    <property type="entry name" value="KARI_C"/>
    <property type="match status" value="1"/>
</dbReference>
<dbReference type="Pfam" id="PF07991">
    <property type="entry name" value="KARI_N"/>
    <property type="match status" value="1"/>
</dbReference>
<dbReference type="PIRSF" id="PIRSF000116">
    <property type="entry name" value="IlvC_gammaproteo"/>
    <property type="match status" value="1"/>
</dbReference>
<dbReference type="SUPFAM" id="SSF48179">
    <property type="entry name" value="6-phosphogluconate dehydrogenase C-terminal domain-like"/>
    <property type="match status" value="1"/>
</dbReference>
<dbReference type="SUPFAM" id="SSF51735">
    <property type="entry name" value="NAD(P)-binding Rossmann-fold domains"/>
    <property type="match status" value="1"/>
</dbReference>
<dbReference type="PROSITE" id="PS51851">
    <property type="entry name" value="KARI_C"/>
    <property type="match status" value="1"/>
</dbReference>
<dbReference type="PROSITE" id="PS51850">
    <property type="entry name" value="KARI_N"/>
    <property type="match status" value="1"/>
</dbReference>
<feature type="chain" id="PRO_0000226158" description="Ketol-acid reductoisomerase (NADP(+))">
    <location>
        <begin position="1"/>
        <end position="342"/>
    </location>
</feature>
<feature type="domain" description="KARI N-terminal Rossmann" evidence="2">
    <location>
        <begin position="2"/>
        <end position="181"/>
    </location>
</feature>
<feature type="domain" description="KARI C-terminal knotted" evidence="3">
    <location>
        <begin position="182"/>
        <end position="327"/>
    </location>
</feature>
<feature type="active site" evidence="1">
    <location>
        <position position="107"/>
    </location>
</feature>
<feature type="binding site" evidence="1">
    <location>
        <begin position="25"/>
        <end position="28"/>
    </location>
    <ligand>
        <name>NADP(+)</name>
        <dbReference type="ChEBI" id="CHEBI:58349"/>
    </ligand>
</feature>
<feature type="binding site" evidence="1">
    <location>
        <position position="48"/>
    </location>
    <ligand>
        <name>NADP(+)</name>
        <dbReference type="ChEBI" id="CHEBI:58349"/>
    </ligand>
</feature>
<feature type="binding site" evidence="1">
    <location>
        <position position="52"/>
    </location>
    <ligand>
        <name>NADP(+)</name>
        <dbReference type="ChEBI" id="CHEBI:58349"/>
    </ligand>
</feature>
<feature type="binding site" evidence="1">
    <location>
        <begin position="82"/>
        <end position="85"/>
    </location>
    <ligand>
        <name>NADP(+)</name>
        <dbReference type="ChEBI" id="CHEBI:58349"/>
    </ligand>
</feature>
<feature type="binding site" evidence="1">
    <location>
        <position position="133"/>
    </location>
    <ligand>
        <name>NADP(+)</name>
        <dbReference type="ChEBI" id="CHEBI:58349"/>
    </ligand>
</feature>
<feature type="binding site" evidence="1">
    <location>
        <position position="190"/>
    </location>
    <ligand>
        <name>Mg(2+)</name>
        <dbReference type="ChEBI" id="CHEBI:18420"/>
        <label>1</label>
    </ligand>
</feature>
<feature type="binding site" evidence="1">
    <location>
        <position position="190"/>
    </location>
    <ligand>
        <name>Mg(2+)</name>
        <dbReference type="ChEBI" id="CHEBI:18420"/>
        <label>2</label>
    </ligand>
</feature>
<feature type="binding site" evidence="1">
    <location>
        <position position="194"/>
    </location>
    <ligand>
        <name>Mg(2+)</name>
        <dbReference type="ChEBI" id="CHEBI:18420"/>
        <label>1</label>
    </ligand>
</feature>
<feature type="binding site" evidence="1">
    <location>
        <position position="226"/>
    </location>
    <ligand>
        <name>Mg(2+)</name>
        <dbReference type="ChEBI" id="CHEBI:18420"/>
        <label>2</label>
    </ligand>
</feature>
<feature type="binding site" evidence="1">
    <location>
        <position position="230"/>
    </location>
    <ligand>
        <name>Mg(2+)</name>
        <dbReference type="ChEBI" id="CHEBI:18420"/>
        <label>2</label>
    </ligand>
</feature>
<feature type="binding site" evidence="1">
    <location>
        <position position="251"/>
    </location>
    <ligand>
        <name>substrate</name>
    </ligand>
</feature>
<sequence length="342" mass="37469">MVKVYYNGDIKENVLAGKKVAVIGYGSQGHAHALNLKESGVDVIVGVRKGKSFAKAEEDGHQVFTVREAAEQADIVMVLLPDEQQQKVYEAEIKDGLQAGNSLVFAHGFNVHFHQIVPPADVDVFLVAPKGPGHLVRRTFEQGAGVPALFAIYQDVTGEAKDKALAYAKAIGGARAGVLETTFKEETETDLFGEQAVLCGGLTSLVKAGFETLTEAGYQPELAYFECLHELKLIVDLMYEEGLAGMRYSISDTAQWGDFVSGPRVVDEKVKESMKEVLKDIQNGTFAKEWIVENQVNRPRFNAINASENEHQIEVVGRKLREMMPFVKQGKKKEAVVAGAKN</sequence>
<reference key="1">
    <citation type="journal article" date="2004" name="J. Mol. Microbiol. Biotechnol.">
        <title>The complete genome sequence of Bacillus licheniformis DSM13, an organism with great industrial potential.</title>
        <authorList>
            <person name="Veith B."/>
            <person name="Herzberg C."/>
            <person name="Steckel S."/>
            <person name="Feesche J."/>
            <person name="Maurer K.H."/>
            <person name="Ehrenreich P."/>
            <person name="Baeumer S."/>
            <person name="Henne A."/>
            <person name="Liesegang H."/>
            <person name="Merkl R."/>
            <person name="Ehrenreich A."/>
            <person name="Gottschalk G."/>
        </authorList>
    </citation>
    <scope>NUCLEOTIDE SEQUENCE [LARGE SCALE GENOMIC DNA]</scope>
    <source>
        <strain>ATCC 14580 / DSM 13 / JCM 2505 / CCUG 7422 / NBRC 12200 / NCIMB 9375 / NCTC 10341 / NRRL NRS-1264 / Gibson 46</strain>
    </source>
</reference>
<reference key="2">
    <citation type="journal article" date="2004" name="Genome Biol.">
        <title>Complete genome sequence of the industrial bacterium Bacillus licheniformis and comparisons with closely related Bacillus species.</title>
        <authorList>
            <person name="Rey M.W."/>
            <person name="Ramaiya P."/>
            <person name="Nelson B.A."/>
            <person name="Brody-Karpin S.D."/>
            <person name="Zaretsky E.J."/>
            <person name="Tang M."/>
            <person name="Lopez de Leon A."/>
            <person name="Xiang H."/>
            <person name="Gusti V."/>
            <person name="Clausen I.G."/>
            <person name="Olsen P.B."/>
            <person name="Rasmussen M.D."/>
            <person name="Andersen J.T."/>
            <person name="Joergensen P.L."/>
            <person name="Larsen T.S."/>
            <person name="Sorokin A."/>
            <person name="Bolotin A."/>
            <person name="Lapidus A."/>
            <person name="Galleron N."/>
            <person name="Ehrlich S.D."/>
            <person name="Berka R.M."/>
        </authorList>
    </citation>
    <scope>NUCLEOTIDE SEQUENCE [LARGE SCALE GENOMIC DNA]</scope>
    <source>
        <strain>ATCC 14580 / DSM 13 / JCM 2505 / CCUG 7422 / NBRC 12200 / NCIMB 9375 / NCTC 10341 / NRRL NRS-1264 / Gibson 46</strain>
    </source>
</reference>
<evidence type="ECO:0000255" key="1">
    <source>
        <dbReference type="HAMAP-Rule" id="MF_00435"/>
    </source>
</evidence>
<evidence type="ECO:0000255" key="2">
    <source>
        <dbReference type="PROSITE-ProRule" id="PRU01197"/>
    </source>
</evidence>
<evidence type="ECO:0000255" key="3">
    <source>
        <dbReference type="PROSITE-ProRule" id="PRU01198"/>
    </source>
</evidence>
<keyword id="KW-0028">Amino-acid biosynthesis</keyword>
<keyword id="KW-0100">Branched-chain amino acid biosynthesis</keyword>
<keyword id="KW-0460">Magnesium</keyword>
<keyword id="KW-0479">Metal-binding</keyword>
<keyword id="KW-0521">NADP</keyword>
<keyword id="KW-0560">Oxidoreductase</keyword>
<keyword id="KW-1185">Reference proteome</keyword>
<comment type="function">
    <text evidence="1">Involved in the biosynthesis of branched-chain amino acids (BCAA). Catalyzes an alkyl-migration followed by a ketol-acid reduction of (S)-2-acetolactate (S2AL) to yield (R)-2,3-dihydroxy-isovalerate. In the isomerase reaction, S2AL is rearranged via a Mg-dependent methyl migration to produce 3-hydroxy-3-methyl-2-ketobutyrate (HMKB). In the reductase reaction, this 2-ketoacid undergoes a metal-dependent reduction by NADPH to yield (R)-2,3-dihydroxy-isovalerate.</text>
</comment>
<comment type="catalytic activity">
    <reaction evidence="1">
        <text>(2R)-2,3-dihydroxy-3-methylbutanoate + NADP(+) = (2S)-2-acetolactate + NADPH + H(+)</text>
        <dbReference type="Rhea" id="RHEA:22068"/>
        <dbReference type="ChEBI" id="CHEBI:15378"/>
        <dbReference type="ChEBI" id="CHEBI:49072"/>
        <dbReference type="ChEBI" id="CHEBI:57783"/>
        <dbReference type="ChEBI" id="CHEBI:58349"/>
        <dbReference type="ChEBI" id="CHEBI:58476"/>
        <dbReference type="EC" id="1.1.1.86"/>
    </reaction>
</comment>
<comment type="catalytic activity">
    <reaction evidence="1">
        <text>(2R,3R)-2,3-dihydroxy-3-methylpentanoate + NADP(+) = (S)-2-ethyl-2-hydroxy-3-oxobutanoate + NADPH + H(+)</text>
        <dbReference type="Rhea" id="RHEA:13493"/>
        <dbReference type="ChEBI" id="CHEBI:15378"/>
        <dbReference type="ChEBI" id="CHEBI:49256"/>
        <dbReference type="ChEBI" id="CHEBI:49258"/>
        <dbReference type="ChEBI" id="CHEBI:57783"/>
        <dbReference type="ChEBI" id="CHEBI:58349"/>
        <dbReference type="EC" id="1.1.1.86"/>
    </reaction>
</comment>
<comment type="cofactor">
    <cofactor evidence="1">
        <name>Mg(2+)</name>
        <dbReference type="ChEBI" id="CHEBI:18420"/>
    </cofactor>
    <text evidence="1">Binds 2 magnesium ions per subunit.</text>
</comment>
<comment type="pathway">
    <text evidence="1">Amino-acid biosynthesis; L-isoleucine biosynthesis; L-isoleucine from 2-oxobutanoate: step 2/4.</text>
</comment>
<comment type="pathway">
    <text evidence="1">Amino-acid biosynthesis; L-valine biosynthesis; L-valine from pyruvate: step 2/4.</text>
</comment>
<comment type="similarity">
    <text evidence="1">Belongs to the ketol-acid reductoisomerase family.</text>
</comment>